<accession>P0CX09</accession>
<accession>D3DLI1</accession>
<accession>P39941</accession>
<reference key="1">
    <citation type="journal article" date="1997" name="Nature">
        <title>The nucleotide sequence of Saccharomyces cerevisiae chromosome XIV and its evolutionary implications.</title>
        <authorList>
            <person name="Philippsen P."/>
            <person name="Kleine K."/>
            <person name="Poehlmann R."/>
            <person name="Duesterhoeft A."/>
            <person name="Hamberg K."/>
            <person name="Hegemann J.H."/>
            <person name="Obermaier B."/>
            <person name="Urrestarazu L.A."/>
            <person name="Aert R."/>
            <person name="Albermann K."/>
            <person name="Altmann R."/>
            <person name="Andre B."/>
            <person name="Baladron V."/>
            <person name="Ballesta J.P.G."/>
            <person name="Becam A.-M."/>
            <person name="Beinhauer J.D."/>
            <person name="Boskovic J."/>
            <person name="Buitrago M.J."/>
            <person name="Bussereau F."/>
            <person name="Coster F."/>
            <person name="Crouzet M."/>
            <person name="D'Angelo M."/>
            <person name="Dal Pero F."/>
            <person name="De Antoni A."/>
            <person name="del Rey F."/>
            <person name="Doignon F."/>
            <person name="Domdey H."/>
            <person name="Dubois E."/>
            <person name="Fiedler T.A."/>
            <person name="Fleig U."/>
            <person name="Floeth M."/>
            <person name="Fritz C."/>
            <person name="Gaillardin C."/>
            <person name="Garcia-Cantalejo J.M."/>
            <person name="Glansdorff N."/>
            <person name="Goffeau A."/>
            <person name="Gueldener U."/>
            <person name="Herbert C.J."/>
            <person name="Heumann K."/>
            <person name="Heuss-Neitzel D."/>
            <person name="Hilbert H."/>
            <person name="Hinni K."/>
            <person name="Iraqui Houssaini I."/>
            <person name="Jacquet M."/>
            <person name="Jimenez A."/>
            <person name="Jonniaux J.-L."/>
            <person name="Karpfinger-Hartl L."/>
            <person name="Lanfranchi G."/>
            <person name="Lepingle A."/>
            <person name="Levesque H."/>
            <person name="Lyck R."/>
            <person name="Maftahi M."/>
            <person name="Mallet L."/>
            <person name="Maurer C.T.C."/>
            <person name="Messenguy F."/>
            <person name="Mewes H.-W."/>
            <person name="Moestl D."/>
            <person name="Nasr F."/>
            <person name="Nicaud J.-M."/>
            <person name="Niedenthal R.K."/>
            <person name="Pandolfo D."/>
            <person name="Pierard A."/>
            <person name="Piravandi E."/>
            <person name="Planta R.J."/>
            <person name="Pohl T.M."/>
            <person name="Purnelle B."/>
            <person name="Rebischung C."/>
            <person name="Remacha M.A."/>
            <person name="Revuelta J.L."/>
            <person name="Rinke M."/>
            <person name="Saiz J.E."/>
            <person name="Sartorello F."/>
            <person name="Scherens B."/>
            <person name="Sen-Gupta M."/>
            <person name="Soler-Mira A."/>
            <person name="Urbanus J.H.M."/>
            <person name="Valle G."/>
            <person name="Van Dyck L."/>
            <person name="Verhasselt P."/>
            <person name="Vierendeels F."/>
            <person name="Vissers S."/>
            <person name="Voet M."/>
            <person name="Volckaert G."/>
            <person name="Wach A."/>
            <person name="Wambutt R."/>
            <person name="Wedler H."/>
            <person name="Zollner A."/>
            <person name="Hani J."/>
        </authorList>
    </citation>
    <scope>NUCLEOTIDE SEQUENCE [LARGE SCALE GENOMIC DNA]</scope>
    <source>
        <strain>ATCC 204508 / S288c</strain>
    </source>
</reference>
<reference key="2">
    <citation type="journal article" date="2014" name="G3 (Bethesda)">
        <title>The reference genome sequence of Saccharomyces cerevisiae: Then and now.</title>
        <authorList>
            <person name="Engel S.R."/>
            <person name="Dietrich F.S."/>
            <person name="Fisk D.G."/>
            <person name="Binkley G."/>
            <person name="Balakrishnan R."/>
            <person name="Costanzo M.C."/>
            <person name="Dwight S.S."/>
            <person name="Hitz B.C."/>
            <person name="Karra K."/>
            <person name="Nash R.S."/>
            <person name="Weng S."/>
            <person name="Wong E.D."/>
            <person name="Lloyd P."/>
            <person name="Skrzypek M.S."/>
            <person name="Miyasato S.R."/>
            <person name="Simison M."/>
            <person name="Cherry J.M."/>
        </authorList>
    </citation>
    <scope>GENOME REANNOTATION</scope>
    <source>
        <strain>ATCC 204508 / S288c</strain>
    </source>
</reference>
<reference key="3">
    <citation type="journal article" date="1996" name="Yeast">
        <title>Sequencing of a 9.2 kb telomeric fragment from the right arm of Saccharomyces cerevisiae chromosome XIV.</title>
        <authorList>
            <person name="Levesque H."/>
            <person name="Lepingle A."/>
            <person name="Nicaud J.-M."/>
            <person name="Gaillardin C."/>
        </authorList>
    </citation>
    <scope>NUCLEOTIDE SEQUENCE [GENOMIC DNA] OF 1-439</scope>
    <source>
        <strain>ATCC 204508 / S288c</strain>
    </source>
</reference>
<reference key="4">
    <citation type="journal article" date="2016" name="Sci. Rep.">
        <title>Hxt13, Hxt15, Hxt16 and Hxt17 from Saccharomyces cerevisiae represent a novel type of polyol transporters.</title>
        <authorList>
            <person name="Jordan P."/>
            <person name="Choe J.Y."/>
            <person name="Boles E."/>
            <person name="Oreb M."/>
        </authorList>
    </citation>
    <scope>FUNCTION</scope>
    <scope>CATALYTIC ACTIVITY</scope>
    <scope>BIOPHYSICOCHEMICAL PROPERTIES</scope>
</reference>
<gene>
    <name evidence="2" type="primary">MAN2</name>
    <name type="ordered locus">YNR073C</name>
    <name type="ORF">N3810</name>
</gene>
<feature type="chain" id="PRO_0000409748" description="Mannitol dehydrogenase 2">
    <location>
        <begin position="1"/>
        <end position="502"/>
    </location>
</feature>
<protein>
    <recommendedName>
        <fullName evidence="2">Mannitol dehydrogenase 2</fullName>
        <ecNumber evidence="1">1.1.1.67</ecNumber>
    </recommendedName>
</protein>
<keyword id="KW-0520">NAD</keyword>
<keyword id="KW-0560">Oxidoreductase</keyword>
<keyword id="KW-1185">Reference proteome</keyword>
<dbReference type="EC" id="1.1.1.67" evidence="1"/>
<dbReference type="EMBL" id="Z71688">
    <property type="protein sequence ID" value="CAA96356.1"/>
    <property type="molecule type" value="Genomic_DNA"/>
</dbReference>
<dbReference type="EMBL" id="Z71689">
    <property type="protein sequence ID" value="CAA96358.1"/>
    <property type="molecule type" value="Genomic_DNA"/>
</dbReference>
<dbReference type="EMBL" id="X86790">
    <property type="protein sequence ID" value="CAA60486.1"/>
    <property type="molecule type" value="Genomic_DNA"/>
</dbReference>
<dbReference type="EMBL" id="BK006947">
    <property type="protein sequence ID" value="DAA10614.1"/>
    <property type="molecule type" value="Genomic_DNA"/>
</dbReference>
<dbReference type="PIR" id="S50519">
    <property type="entry name" value="S50519"/>
</dbReference>
<dbReference type="RefSeq" id="NP_014471.3">
    <property type="nucleotide sequence ID" value="NM_001183250.3"/>
</dbReference>
<dbReference type="SMR" id="P0CX09"/>
<dbReference type="BioGRID" id="35899">
    <property type="interactions" value="83"/>
</dbReference>
<dbReference type="BioGRID" id="36661">
    <property type="interactions" value="56"/>
</dbReference>
<dbReference type="FunCoup" id="P0CX09">
    <property type="interactions" value="78"/>
</dbReference>
<dbReference type="EnsemblFungi" id="YEL070W_mRNA">
    <property type="protein sequence ID" value="YEL070W"/>
    <property type="gene ID" value="YEL070W"/>
</dbReference>
<dbReference type="EnsemblFungi" id="YNR073C_mRNA">
    <property type="protein sequence ID" value="YNR073C"/>
    <property type="gene ID" value="YNR073C"/>
</dbReference>
<dbReference type="GeneID" id="855810"/>
<dbReference type="KEGG" id="sce:YEL070W"/>
<dbReference type="KEGG" id="sce:YNR073C"/>
<dbReference type="AGR" id="SGD:S000005356"/>
<dbReference type="SGD" id="S000005356">
    <property type="gene designation" value="MAN2"/>
</dbReference>
<dbReference type="VEuPathDB" id="FungiDB:YEL070W"/>
<dbReference type="VEuPathDB" id="FungiDB:YNR073C"/>
<dbReference type="GeneTree" id="ENSGT00940000176714"/>
<dbReference type="HOGENOM" id="CLU_027324_0_1_1"/>
<dbReference type="InParanoid" id="P0CX09"/>
<dbReference type="OMA" id="IVASWAR"/>
<dbReference type="OrthoDB" id="2016955at2759"/>
<dbReference type="BioCyc" id="YEAST:G3O-33377-MONOMER"/>
<dbReference type="BioGRID-ORCS" id="855810">
    <property type="hits" value="0 hits in 10 CRISPR screens"/>
</dbReference>
<dbReference type="PRO" id="PR:P0CX09"/>
<dbReference type="Proteomes" id="UP000002311">
    <property type="component" value="Chromosome XIV"/>
</dbReference>
<dbReference type="RNAct" id="P0CX09">
    <property type="molecule type" value="protein"/>
</dbReference>
<dbReference type="ExpressionAtlas" id="P0CX09">
    <property type="expression patterns" value="baseline and differential"/>
</dbReference>
<dbReference type="GO" id="GO:0050086">
    <property type="term" value="F:mannitol 2-dehydrogenase activity"/>
    <property type="evidence" value="ECO:0007669"/>
    <property type="project" value="UniProtKB-EC"/>
</dbReference>
<dbReference type="GO" id="GO:0046029">
    <property type="term" value="F:mannitol dehydrogenase activity"/>
    <property type="evidence" value="ECO:0000315"/>
    <property type="project" value="SGD"/>
</dbReference>
<dbReference type="GO" id="GO:0019594">
    <property type="term" value="P:mannitol metabolic process"/>
    <property type="evidence" value="ECO:0007669"/>
    <property type="project" value="InterPro"/>
</dbReference>
<dbReference type="FunFam" id="3.40.50.720:FF:000129">
    <property type="entry name" value="D-mannonate oxidoreductase"/>
    <property type="match status" value="1"/>
</dbReference>
<dbReference type="FunFam" id="1.10.1040.10:FF:000028">
    <property type="entry name" value="Mannitol 2-dehydrogenase"/>
    <property type="match status" value="1"/>
</dbReference>
<dbReference type="Gene3D" id="1.10.1040.10">
    <property type="entry name" value="N-(1-d-carboxylethyl)-l-norvaline Dehydrogenase, domain 2"/>
    <property type="match status" value="1"/>
</dbReference>
<dbReference type="Gene3D" id="3.40.50.720">
    <property type="entry name" value="NAD(P)-binding Rossmann-like Domain"/>
    <property type="match status" value="1"/>
</dbReference>
<dbReference type="InterPro" id="IPR008927">
    <property type="entry name" value="6-PGluconate_DH-like_C_sf"/>
</dbReference>
<dbReference type="InterPro" id="IPR013328">
    <property type="entry name" value="6PGD_dom2"/>
</dbReference>
<dbReference type="InterPro" id="IPR000669">
    <property type="entry name" value="Mannitol_DH"/>
</dbReference>
<dbReference type="InterPro" id="IPR050988">
    <property type="entry name" value="Mannitol_DH/Oxidoreductase"/>
</dbReference>
<dbReference type="InterPro" id="IPR013118">
    <property type="entry name" value="Mannitol_DH_C"/>
</dbReference>
<dbReference type="InterPro" id="IPR023027">
    <property type="entry name" value="Mannitol_DH_CS"/>
</dbReference>
<dbReference type="InterPro" id="IPR013131">
    <property type="entry name" value="Mannitol_DH_N"/>
</dbReference>
<dbReference type="InterPro" id="IPR036291">
    <property type="entry name" value="NAD(P)-bd_dom_sf"/>
</dbReference>
<dbReference type="PANTHER" id="PTHR43362:SF1">
    <property type="entry name" value="MANNITOL DEHYDROGENASE 2-RELATED"/>
    <property type="match status" value="1"/>
</dbReference>
<dbReference type="PANTHER" id="PTHR43362">
    <property type="entry name" value="MANNITOL DEHYDROGENASE DSF1-RELATED"/>
    <property type="match status" value="1"/>
</dbReference>
<dbReference type="Pfam" id="PF01232">
    <property type="entry name" value="Mannitol_dh"/>
    <property type="match status" value="1"/>
</dbReference>
<dbReference type="Pfam" id="PF08125">
    <property type="entry name" value="Mannitol_dh_C"/>
    <property type="match status" value="1"/>
</dbReference>
<dbReference type="PRINTS" id="PR00084">
    <property type="entry name" value="MTLDHDRGNASE"/>
</dbReference>
<dbReference type="SUPFAM" id="SSF48179">
    <property type="entry name" value="6-phosphogluconate dehydrogenase C-terminal domain-like"/>
    <property type="match status" value="1"/>
</dbReference>
<dbReference type="SUPFAM" id="SSF51735">
    <property type="entry name" value="NAD(P)-binding Rossmann-fold domains"/>
    <property type="match status" value="1"/>
</dbReference>
<dbReference type="PROSITE" id="PS00974">
    <property type="entry name" value="MANNITOL_DHGENASE"/>
    <property type="match status" value="1"/>
</dbReference>
<evidence type="ECO:0000269" key="1">
    <source>
    </source>
</evidence>
<evidence type="ECO:0000303" key="2">
    <source>
    </source>
</evidence>
<evidence type="ECO:0000305" key="3"/>
<proteinExistence type="evidence at protein level"/>
<organism>
    <name type="scientific">Saccharomyces cerevisiae (strain ATCC 204508 / S288c)</name>
    <name type="common">Baker's yeast</name>
    <dbReference type="NCBI Taxonomy" id="559292"/>
    <lineage>
        <taxon>Eukaryota</taxon>
        <taxon>Fungi</taxon>
        <taxon>Dikarya</taxon>
        <taxon>Ascomycota</taxon>
        <taxon>Saccharomycotina</taxon>
        <taxon>Saccharomycetes</taxon>
        <taxon>Saccharomycetales</taxon>
        <taxon>Saccharomycetaceae</taxon>
        <taxon>Saccharomyces</taxon>
    </lineage>
</organism>
<name>MAN2_YEAST</name>
<comment type="function">
    <text evidence="1">Catalyzes the NAD(H)-dependent interconversion of D-fructose and D-mannitol in the mannitol metabolic pathway.</text>
</comment>
<comment type="catalytic activity">
    <reaction evidence="1">
        <text>D-mannitol + NAD(+) = D-fructose + NADH + H(+)</text>
        <dbReference type="Rhea" id="RHEA:12084"/>
        <dbReference type="ChEBI" id="CHEBI:15378"/>
        <dbReference type="ChEBI" id="CHEBI:16899"/>
        <dbReference type="ChEBI" id="CHEBI:37721"/>
        <dbReference type="ChEBI" id="CHEBI:57540"/>
        <dbReference type="ChEBI" id="CHEBI:57945"/>
        <dbReference type="EC" id="1.1.1.67"/>
    </reaction>
</comment>
<comment type="biophysicochemical properties">
    <kinetics>
        <KM evidence="1">3.6 mM for mannitol</KM>
        <KM evidence="1">634.9 mM for sorbitol</KM>
        <Vmax evidence="1">0.4 umol/min/mg enzyme toward mannitol</Vmax>
        <Vmax evidence="1">2.1 umol/min/mg enzyme toward sorbitol</Vmax>
    </kinetics>
</comment>
<comment type="miscellaneous">
    <text>There are two genes for this mannitol dehydrogenase in yeast, DSF1 and YNR073C.</text>
</comment>
<comment type="similarity">
    <text evidence="3">Belongs to the mannitol dehydrogenase family.</text>
</comment>
<sequence>MTKSDETTATSLNAKTLKSFESTLPIPTYPREGVKQGIVHLGVGAFHRSHLAVFMHRLMQEHHLKDWSICGVGLMKADALMRDAMKAQDCLYTLVERGIKDTNAYIVGSITAYMYAPDDPRAVIEKMANPDTHIVSLTVTENGYYHSEATNSLMTDAPEIINDLNHPEKPDTLYGYLYEALLLRYKRGLTPFTIMSCDNMPQNGVTVKTMLVAFAKLKKDEKFAAWIEDKVTSPNSMVDRVTPRCTDKERKYVADTWGIKDQCPVVAEPFIQWVLEDNFSDGRPPWELVGVQVVKDVDSYELMKLRLLNGGHSAMGYLGYLAGYTYIHEVVNDPTINKYIRVLMREEVIPLLPKVPGVDFEEYTASVLERFSNPAIQDTVARICLMGSGKMPKYVLPSIYEQLRKPDGKYKLLAVCVAGWFRYLTGVDMNGKPFEIEDPMAPTLKAAAVKGGKDPHELLNIEVLFSPEIRDNKEFVAQLTHSLETVYDKGPIAAIKEILDQV</sequence>